<keyword id="KW-0997">Cell inner membrane</keyword>
<keyword id="KW-1003">Cell membrane</keyword>
<keyword id="KW-0472">Membrane</keyword>
<keyword id="KW-0520">NAD</keyword>
<keyword id="KW-0874">Quinone</keyword>
<keyword id="KW-1278">Translocase</keyword>
<keyword id="KW-0812">Transmembrane</keyword>
<keyword id="KW-1133">Transmembrane helix</keyword>
<keyword id="KW-0813">Transport</keyword>
<keyword id="KW-0830">Ubiquinone</keyword>
<reference key="1">
    <citation type="journal article" date="2003" name="J. Bacteriol.">
        <title>Comparative genomics of Salmonella enterica serovar Typhi strains Ty2 and CT18.</title>
        <authorList>
            <person name="Deng W."/>
            <person name="Liou S.-R."/>
            <person name="Plunkett G. III"/>
            <person name="Mayhew G.F."/>
            <person name="Rose D.J."/>
            <person name="Burland V."/>
            <person name="Kodoyianni V."/>
            <person name="Schwartz D.C."/>
            <person name="Blattner F.R."/>
        </authorList>
    </citation>
    <scope>NUCLEOTIDE SEQUENCE [LARGE SCALE GENOMIC DNA]</scope>
    <source>
        <strain>ATCC 700931 / Ty2</strain>
    </source>
</reference>
<reference key="2">
    <citation type="journal article" date="2001" name="Nature">
        <title>Complete genome sequence of a multiple drug resistant Salmonella enterica serovar Typhi CT18.</title>
        <authorList>
            <person name="Parkhill J."/>
            <person name="Dougan G."/>
            <person name="James K.D."/>
            <person name="Thomson N.R."/>
            <person name="Pickard D."/>
            <person name="Wain J."/>
            <person name="Churcher C.M."/>
            <person name="Mungall K.L."/>
            <person name="Bentley S.D."/>
            <person name="Holden M.T.G."/>
            <person name="Sebaihia M."/>
            <person name="Baker S."/>
            <person name="Basham D."/>
            <person name="Brooks K."/>
            <person name="Chillingworth T."/>
            <person name="Connerton P."/>
            <person name="Cronin A."/>
            <person name="Davis P."/>
            <person name="Davies R.M."/>
            <person name="Dowd L."/>
            <person name="White N."/>
            <person name="Farrar J."/>
            <person name="Feltwell T."/>
            <person name="Hamlin N."/>
            <person name="Haque A."/>
            <person name="Hien T.T."/>
            <person name="Holroyd S."/>
            <person name="Jagels K."/>
            <person name="Krogh A."/>
            <person name="Larsen T.S."/>
            <person name="Leather S."/>
            <person name="Moule S."/>
            <person name="O'Gaora P."/>
            <person name="Parry C."/>
            <person name="Quail M.A."/>
            <person name="Rutherford K.M."/>
            <person name="Simmonds M."/>
            <person name="Skelton J."/>
            <person name="Stevens K."/>
            <person name="Whitehead S."/>
            <person name="Barrell B.G."/>
        </authorList>
    </citation>
    <scope>NUCLEOTIDE SEQUENCE [LARGE SCALE GENOMIC DNA]</scope>
    <source>
        <strain>CT18</strain>
    </source>
</reference>
<proteinExistence type="inferred from homology"/>
<organism>
    <name type="scientific">Salmonella typhi</name>
    <dbReference type="NCBI Taxonomy" id="90370"/>
    <lineage>
        <taxon>Bacteria</taxon>
        <taxon>Pseudomonadati</taxon>
        <taxon>Pseudomonadota</taxon>
        <taxon>Gammaproteobacteria</taxon>
        <taxon>Enterobacterales</taxon>
        <taxon>Enterobacteriaceae</taxon>
        <taxon>Salmonella</taxon>
    </lineage>
</organism>
<name>NUOA_SALTI</name>
<sequence length="147" mass="16493">MSMSTSTEVIAHHWAFAIFLIVAIGLCCLMLVGGWFLGGRARARHKNVPFESGIDSVGTARLRLSAKFYLVAMFFVIFDVEALYLFAWSTSIRESGWVGFVEAAIFIFVLLAGLVYLARIGALDWTPARSRRERMNPETNSIANRQR</sequence>
<evidence type="ECO:0000255" key="1">
    <source>
        <dbReference type="HAMAP-Rule" id="MF_01394"/>
    </source>
</evidence>
<feature type="chain" id="PRO_0000362775" description="NADH-quinone oxidoreductase subunit A">
    <location>
        <begin position="1"/>
        <end position="147"/>
    </location>
</feature>
<feature type="transmembrane region" description="Helical" evidence="1">
    <location>
        <begin position="16"/>
        <end position="36"/>
    </location>
</feature>
<feature type="transmembrane region" description="Helical" evidence="1">
    <location>
        <begin position="68"/>
        <end position="88"/>
    </location>
</feature>
<feature type="transmembrane region" description="Helical" evidence="1">
    <location>
        <begin position="97"/>
        <end position="117"/>
    </location>
</feature>
<protein>
    <recommendedName>
        <fullName evidence="1">NADH-quinone oxidoreductase subunit A</fullName>
        <ecNumber evidence="1">7.1.1.-</ecNumber>
    </recommendedName>
    <alternativeName>
        <fullName evidence="1">NADH dehydrogenase I subunit A</fullName>
    </alternativeName>
    <alternativeName>
        <fullName evidence="1">NDH-1 subunit A</fullName>
    </alternativeName>
    <alternativeName>
        <fullName evidence="1">NUO1</fullName>
    </alternativeName>
</protein>
<accession>Q8XFY2</accession>
<accession>Q7AML6</accession>
<dbReference type="EC" id="7.1.1.-" evidence="1"/>
<dbReference type="EMBL" id="AE014613">
    <property type="protein sequence ID" value="AAO68242.1"/>
    <property type="molecule type" value="Genomic_DNA"/>
</dbReference>
<dbReference type="EMBL" id="AL513382">
    <property type="protein sequence ID" value="CAD07560.1"/>
    <property type="molecule type" value="Genomic_DNA"/>
</dbReference>
<dbReference type="RefSeq" id="NP_456870.1">
    <property type="nucleotide sequence ID" value="NC_003198.1"/>
</dbReference>
<dbReference type="RefSeq" id="WP_000062993.1">
    <property type="nucleotide sequence ID" value="NZ_WSUR01000029.1"/>
</dbReference>
<dbReference type="SMR" id="Q8XFY2"/>
<dbReference type="STRING" id="220341.gene:17586457"/>
<dbReference type="GeneID" id="66756777"/>
<dbReference type="KEGG" id="stt:t0536"/>
<dbReference type="KEGG" id="sty:STY2558"/>
<dbReference type="PATRIC" id="fig|220341.7.peg.2588"/>
<dbReference type="eggNOG" id="COG0838">
    <property type="taxonomic scope" value="Bacteria"/>
</dbReference>
<dbReference type="HOGENOM" id="CLU_119549_2_0_6"/>
<dbReference type="OMA" id="YVYAFLY"/>
<dbReference type="OrthoDB" id="9791970at2"/>
<dbReference type="Proteomes" id="UP000000541">
    <property type="component" value="Chromosome"/>
</dbReference>
<dbReference type="Proteomes" id="UP000002670">
    <property type="component" value="Chromosome"/>
</dbReference>
<dbReference type="GO" id="GO:0030964">
    <property type="term" value="C:NADH dehydrogenase complex"/>
    <property type="evidence" value="ECO:0007669"/>
    <property type="project" value="TreeGrafter"/>
</dbReference>
<dbReference type="GO" id="GO:0005886">
    <property type="term" value="C:plasma membrane"/>
    <property type="evidence" value="ECO:0007669"/>
    <property type="project" value="UniProtKB-SubCell"/>
</dbReference>
<dbReference type="GO" id="GO:0008137">
    <property type="term" value="F:NADH dehydrogenase (ubiquinone) activity"/>
    <property type="evidence" value="ECO:0007669"/>
    <property type="project" value="InterPro"/>
</dbReference>
<dbReference type="GO" id="GO:0050136">
    <property type="term" value="F:NADH:ubiquinone reductase (non-electrogenic) activity"/>
    <property type="evidence" value="ECO:0007669"/>
    <property type="project" value="UniProtKB-UniRule"/>
</dbReference>
<dbReference type="GO" id="GO:0048038">
    <property type="term" value="F:quinone binding"/>
    <property type="evidence" value="ECO:0007669"/>
    <property type="project" value="UniProtKB-KW"/>
</dbReference>
<dbReference type="FunFam" id="1.20.58.1610:FF:000003">
    <property type="entry name" value="NADH-quinone oxidoreductase subunit A"/>
    <property type="match status" value="1"/>
</dbReference>
<dbReference type="Gene3D" id="1.20.58.1610">
    <property type="entry name" value="NADH:ubiquinone/plastoquinone oxidoreductase, chain 3"/>
    <property type="match status" value="1"/>
</dbReference>
<dbReference type="HAMAP" id="MF_01394">
    <property type="entry name" value="NDH1_NuoA"/>
    <property type="match status" value="1"/>
</dbReference>
<dbReference type="InterPro" id="IPR023043">
    <property type="entry name" value="NAD(P)H_OxRDtase_bac/plastid"/>
</dbReference>
<dbReference type="InterPro" id="IPR000440">
    <property type="entry name" value="NADH_UbQ/plastoQ_OxRdtase_su3"/>
</dbReference>
<dbReference type="InterPro" id="IPR038430">
    <property type="entry name" value="NDAH_ubi_oxred_su3_sf"/>
</dbReference>
<dbReference type="PANTHER" id="PTHR11058:SF21">
    <property type="entry name" value="NADH-QUINONE OXIDOREDUCTASE SUBUNIT A"/>
    <property type="match status" value="1"/>
</dbReference>
<dbReference type="PANTHER" id="PTHR11058">
    <property type="entry name" value="NADH-UBIQUINONE OXIDOREDUCTASE CHAIN 3"/>
    <property type="match status" value="1"/>
</dbReference>
<dbReference type="Pfam" id="PF00507">
    <property type="entry name" value="Oxidored_q4"/>
    <property type="match status" value="1"/>
</dbReference>
<gene>
    <name evidence="1" type="primary">nuoA</name>
    <name type="ordered locus">STY2558</name>
    <name type="ordered locus">t0536</name>
</gene>
<comment type="function">
    <text evidence="1">NDH-1 shuttles electrons from NADH, via FMN and iron-sulfur (Fe-S) centers, to quinones in the respiratory chain. The immediate electron acceptor for the enzyme in this species is believed to be ubiquinone. Couples the redox reaction to proton translocation (for every two electrons transferred, four hydrogen ions are translocated across the cytoplasmic membrane), and thus conserves the redox energy in a proton gradient.</text>
</comment>
<comment type="catalytic activity">
    <reaction evidence="1">
        <text>a quinone + NADH + 5 H(+)(in) = a quinol + NAD(+) + 4 H(+)(out)</text>
        <dbReference type="Rhea" id="RHEA:57888"/>
        <dbReference type="ChEBI" id="CHEBI:15378"/>
        <dbReference type="ChEBI" id="CHEBI:24646"/>
        <dbReference type="ChEBI" id="CHEBI:57540"/>
        <dbReference type="ChEBI" id="CHEBI:57945"/>
        <dbReference type="ChEBI" id="CHEBI:132124"/>
    </reaction>
</comment>
<comment type="subunit">
    <text evidence="1">NDH-1 is composed of 13 different subunits. Subunits NuoA, H, J, K, L, M, N constitute the membrane sector of the complex.</text>
</comment>
<comment type="subcellular location">
    <subcellularLocation>
        <location evidence="1">Cell inner membrane</location>
        <topology evidence="1">Multi-pass membrane protein</topology>
    </subcellularLocation>
</comment>
<comment type="similarity">
    <text evidence="1">Belongs to the complex I subunit 3 family.</text>
</comment>